<keyword id="KW-0002">3D-structure</keyword>
<keyword id="KW-0235">DNA replication</keyword>
<keyword id="KW-0238">DNA-binding</keyword>
<keyword id="KW-0239">DNA-directed DNA polymerase</keyword>
<keyword id="KW-1048">Host nucleus</keyword>
<keyword id="KW-0548">Nucleotidyltransferase</keyword>
<keyword id="KW-1185">Reference proteome</keyword>
<keyword id="KW-0808">Transferase</keyword>
<keyword id="KW-1194">Viral DNA replication</keyword>
<dbReference type="EC" id="2.7.7.7"/>
<dbReference type="EMBL" id="X17403">
    <property type="protein sequence ID" value="CAA35413.1"/>
    <property type="molecule type" value="Genomic_DNA"/>
</dbReference>
<dbReference type="EMBL" id="M17209">
    <property type="protein sequence ID" value="AAA46008.1"/>
    <property type="molecule type" value="Genomic_DNA"/>
</dbReference>
<dbReference type="EMBL" id="M14709">
    <property type="protein sequence ID" value="AAA45988.1"/>
    <property type="molecule type" value="Genomic_DNA"/>
</dbReference>
<dbReference type="EMBL" id="BK000394">
    <property type="protein sequence ID" value="DAA00159.1"/>
    <property type="molecule type" value="Genomic_DNA"/>
</dbReference>
<dbReference type="PIR" id="S09817">
    <property type="entry name" value="DJBEC1"/>
</dbReference>
<dbReference type="PDB" id="1YYP">
    <property type="method" value="X-ray"/>
    <property type="resolution" value="2.50 A"/>
    <property type="chains" value="B=1221-1242"/>
</dbReference>
<dbReference type="PDBsum" id="1YYP"/>
<dbReference type="SMR" id="P08546"/>
<dbReference type="DIP" id="DIP-46030N"/>
<dbReference type="IntAct" id="P08546">
    <property type="interactions" value="1"/>
</dbReference>
<dbReference type="BindingDB" id="P08546"/>
<dbReference type="ChEMBL" id="CHEMBL3414"/>
<dbReference type="DrugBank" id="DB00369">
    <property type="generic name" value="Cidofovir"/>
</dbReference>
<dbReference type="DrugBank" id="DB00529">
    <property type="generic name" value="Foscarnet"/>
</dbReference>
<dbReference type="DrugBank" id="DB02857">
    <property type="generic name" value="Guanosine"/>
</dbReference>
<dbReference type="DrugBank" id="DB01972">
    <property type="generic name" value="Guanosine-5'-Monophosphate"/>
</dbReference>
<dbReference type="DrugCentral" id="P08546"/>
<dbReference type="EvolutionaryTrace" id="P08546"/>
<dbReference type="Proteomes" id="UP000008991">
    <property type="component" value="Segment"/>
</dbReference>
<dbReference type="Proteomes" id="UP000008992">
    <property type="component" value="Segment"/>
</dbReference>
<dbReference type="GO" id="GO:0042025">
    <property type="term" value="C:host cell nucleus"/>
    <property type="evidence" value="ECO:0007669"/>
    <property type="project" value="UniProtKB-SubCell"/>
</dbReference>
<dbReference type="GO" id="GO:0003677">
    <property type="term" value="F:DNA binding"/>
    <property type="evidence" value="ECO:0007669"/>
    <property type="project" value="UniProtKB-KW"/>
</dbReference>
<dbReference type="GO" id="GO:0003887">
    <property type="term" value="F:DNA-directed DNA polymerase activity"/>
    <property type="evidence" value="ECO:0007669"/>
    <property type="project" value="UniProtKB-KW"/>
</dbReference>
<dbReference type="GO" id="GO:0000166">
    <property type="term" value="F:nucleotide binding"/>
    <property type="evidence" value="ECO:0007669"/>
    <property type="project" value="InterPro"/>
</dbReference>
<dbReference type="GO" id="GO:0039686">
    <property type="term" value="P:bidirectional double-stranded viral DNA replication"/>
    <property type="evidence" value="ECO:0000314"/>
    <property type="project" value="UniProtKB"/>
</dbReference>
<dbReference type="GO" id="GO:0006261">
    <property type="term" value="P:DNA-templated DNA replication"/>
    <property type="evidence" value="ECO:0007669"/>
    <property type="project" value="TreeGrafter"/>
</dbReference>
<dbReference type="Gene3D" id="1.10.132.60">
    <property type="entry name" value="DNA polymerase family B, C-terminal domain"/>
    <property type="match status" value="1"/>
</dbReference>
<dbReference type="Gene3D" id="3.30.342.10">
    <property type="entry name" value="DNA Polymerase, chain B, domain 1"/>
    <property type="match status" value="1"/>
</dbReference>
<dbReference type="Gene3D" id="1.10.287.690">
    <property type="entry name" value="Helix hairpin bin"/>
    <property type="match status" value="1"/>
</dbReference>
<dbReference type="Gene3D" id="3.90.1600.10">
    <property type="entry name" value="Palm domain of DNA polymerase"/>
    <property type="match status" value="1"/>
</dbReference>
<dbReference type="Gene3D" id="3.30.420.10">
    <property type="entry name" value="Ribonuclease H-like superfamily/Ribonuclease H"/>
    <property type="match status" value="1"/>
</dbReference>
<dbReference type="InterPro" id="IPR006172">
    <property type="entry name" value="DNA-dir_DNA_pol_B"/>
</dbReference>
<dbReference type="InterPro" id="IPR017964">
    <property type="entry name" value="DNA-dir_DNA_pol_B_CS"/>
</dbReference>
<dbReference type="InterPro" id="IPR006133">
    <property type="entry name" value="DNA-dir_DNA_pol_B_exonuc"/>
</dbReference>
<dbReference type="InterPro" id="IPR006134">
    <property type="entry name" value="DNA-dir_DNA_pol_B_multi_dom"/>
</dbReference>
<dbReference type="InterPro" id="IPR043502">
    <property type="entry name" value="DNA/RNA_pol_sf"/>
</dbReference>
<dbReference type="InterPro" id="IPR042087">
    <property type="entry name" value="DNA_pol_B_thumb"/>
</dbReference>
<dbReference type="InterPro" id="IPR023211">
    <property type="entry name" value="DNA_pol_palm_dom_sf"/>
</dbReference>
<dbReference type="InterPro" id="IPR050240">
    <property type="entry name" value="DNA_pol_type-B"/>
</dbReference>
<dbReference type="InterPro" id="IPR012337">
    <property type="entry name" value="RNaseH-like_sf"/>
</dbReference>
<dbReference type="InterPro" id="IPR036397">
    <property type="entry name" value="RNaseH_sf"/>
</dbReference>
<dbReference type="PANTHER" id="PTHR10322">
    <property type="entry name" value="DNA POLYMERASE CATALYTIC SUBUNIT"/>
    <property type="match status" value="1"/>
</dbReference>
<dbReference type="PANTHER" id="PTHR10322:SF23">
    <property type="entry name" value="DNA POLYMERASE DELTA CATALYTIC SUBUNIT"/>
    <property type="match status" value="1"/>
</dbReference>
<dbReference type="Pfam" id="PF00136">
    <property type="entry name" value="DNA_pol_B"/>
    <property type="match status" value="1"/>
</dbReference>
<dbReference type="Pfam" id="PF03104">
    <property type="entry name" value="DNA_pol_B_exo1"/>
    <property type="match status" value="1"/>
</dbReference>
<dbReference type="PRINTS" id="PR00106">
    <property type="entry name" value="DNAPOLB"/>
</dbReference>
<dbReference type="SMART" id="SM00486">
    <property type="entry name" value="POLBc"/>
    <property type="match status" value="1"/>
</dbReference>
<dbReference type="SUPFAM" id="SSF56672">
    <property type="entry name" value="DNA/RNA polymerases"/>
    <property type="match status" value="1"/>
</dbReference>
<dbReference type="SUPFAM" id="SSF53098">
    <property type="entry name" value="Ribonuclease H-like"/>
    <property type="match status" value="1"/>
</dbReference>
<dbReference type="PROSITE" id="PS00116">
    <property type="entry name" value="DNA_POLYMERASE_B"/>
    <property type="match status" value="1"/>
</dbReference>
<organismHost>
    <name type="scientific">Homo sapiens</name>
    <name type="common">Human</name>
    <dbReference type="NCBI Taxonomy" id="9606"/>
</organismHost>
<evidence type="ECO:0000250" key="1"/>
<evidence type="ECO:0000256" key="2">
    <source>
        <dbReference type="SAM" id="MobiDB-lite"/>
    </source>
</evidence>
<evidence type="ECO:0000305" key="3"/>
<evidence type="ECO:0007829" key="4">
    <source>
        <dbReference type="PDB" id="1YYP"/>
    </source>
</evidence>
<protein>
    <recommendedName>
        <fullName>DNA polymerase catalytic subunit</fullName>
        <ecNumber>2.7.7.7</ecNumber>
    </recommendedName>
</protein>
<reference key="1">
    <citation type="journal article" date="1987" name="J. Virol.">
        <title>Sequence and transcription analysis of the human cytomegalovirus DNA polymerase gene.</title>
        <authorList>
            <person name="Kouzarides T."/>
            <person name="Bankier A.T."/>
            <person name="Satchwell S.C."/>
            <person name="Weston K.M."/>
            <person name="Tomlinson P."/>
            <person name="Barrell B.G."/>
        </authorList>
    </citation>
    <scope>NUCLEOTIDE SEQUENCE [GENOMIC DNA]</scope>
</reference>
<reference key="2">
    <citation type="journal article" date="1987" name="Virology">
        <title>Large-scale rearrangement of homologous regions in the genomes of HCMV and EBV.</title>
        <authorList>
            <person name="Kouzarides T."/>
            <person name="Bankier A.T."/>
            <person name="Satchwell S.C."/>
            <person name="Weston K.M."/>
            <person name="Tomlinson P."/>
            <person name="Barrell B.G."/>
        </authorList>
    </citation>
    <scope>NUCLEOTIDE SEQUENCE [GENOMIC DNA]</scope>
</reference>
<reference key="3">
    <citation type="journal article" date="1990" name="Curr. Top. Microbiol. Immunol.">
        <title>Analysis of the protein-coding content of the sequence of human cytomegalovirus strain AD169.</title>
        <authorList>
            <person name="Chee M.S."/>
            <person name="Bankier A.T."/>
            <person name="Beck S."/>
            <person name="Bohni R."/>
            <person name="Brown C.M."/>
            <person name="Cerny R."/>
            <person name="Horsnell T."/>
            <person name="Hutchison C.A. III"/>
            <person name="Kouzarides T."/>
            <person name="Martignetti J.A."/>
            <person name="Preddie E."/>
            <person name="Satchwell S.C."/>
            <person name="Tomlinson P."/>
            <person name="Weston K.M."/>
            <person name="Barrell B.G."/>
        </authorList>
    </citation>
    <scope>NUCLEOTIDE SEQUENCE [GENOMIC DNA]</scope>
</reference>
<reference key="4">
    <citation type="journal article" date="2003" name="J. Gen. Virol.">
        <title>The human cytomegalovirus genome revisited: comparison with the chimpanzee cytomegalovirus genome.</title>
        <authorList>
            <person name="Davison A.J."/>
            <person name="Dolan A."/>
            <person name="Akter P."/>
            <person name="Addison C."/>
            <person name="Dargan D.J."/>
            <person name="Alcendor D.J."/>
            <person name="McGeoch D.J."/>
            <person name="Hayward G.S."/>
        </authorList>
    </citation>
    <scope>GENOME REANNOTATION</scope>
</reference>
<reference key="5">
    <citation type="journal article" date="2003" name="J. Gen. Virol.">
        <authorList>
            <person name="Davison A.J."/>
            <person name="Dolan A."/>
            <person name="Akter P."/>
            <person name="Addison C."/>
            <person name="Dargan D.J."/>
            <person name="Alcendor D.J."/>
            <person name="McGeoch D.J."/>
            <person name="Hayward G.S."/>
        </authorList>
    </citation>
    <scope>ERRATUM OF PUBMED:12533697</scope>
</reference>
<reference key="6">
    <citation type="journal article" date="2004" name="J. Virol.">
        <title>Identification of proteins in human cytomegalovirus (HCMV) particles: the HCMV proteome.</title>
        <authorList>
            <person name="Varnum S.M."/>
            <person name="Streblow D.N."/>
            <person name="Monroe M.E."/>
            <person name="Smith P."/>
            <person name="Auberry K.J."/>
            <person name="Pasa-Tolic L."/>
            <person name="Wang D."/>
            <person name="Camp D.G. II"/>
            <person name="Rodland K."/>
            <person name="Wiley S."/>
            <person name="Britt W."/>
            <person name="Shenk T."/>
            <person name="Smith R.D."/>
            <person name="Nelson J.A."/>
        </authorList>
    </citation>
    <scope>IDENTIFICATION</scope>
</reference>
<reference key="7">
    <citation type="journal article" date="2004" name="J. Virol.">
        <authorList>
            <person name="Varnum S.M."/>
            <person name="Streblow D.N."/>
            <person name="Monroe M.E."/>
            <person name="Smith P."/>
            <person name="Auberry K.J."/>
            <person name="Pasa-Tolic L."/>
            <person name="Wang D."/>
            <person name="Camp D.G. II"/>
            <person name="Rodland K."/>
            <person name="Wiley S."/>
            <person name="Britt W."/>
            <person name="Shenk T."/>
            <person name="Smith R.D."/>
            <person name="Nelson J.A."/>
        </authorList>
    </citation>
    <scope>ERRATUM OF PUBMED:15452216</scope>
</reference>
<reference key="8">
    <citation type="journal article" date="2006" name="J. Biol. Chem.">
        <title>Crystal structure of the cytomegalovirus DNA polymerase subunit UL44 in complex with the C terminus from the catalytic subunit. Differences in structure and function relative to unliganded UL44.</title>
        <authorList>
            <person name="Appleton B.A."/>
            <person name="Brooks J."/>
            <person name="Loregian A."/>
            <person name="Filman D.J."/>
            <person name="Coen D.M."/>
            <person name="Hogle J.M."/>
        </authorList>
    </citation>
    <scope>X-RAY CRYSTALLOGRAPHY (2.5 ANGSTROMS) OF 1221-1242</scope>
</reference>
<comment type="function">
    <text evidence="1">Replicates viral genomic DNA in the late phase of lytic infection, producing long concatemeric DNA. The replication complex is composed of six viral proteins: the DNA polymerase, processivity factor, primase, primase-associated factor, helicase, and ssDNA-binding protein (By similarity).</text>
</comment>
<comment type="catalytic activity">
    <reaction>
        <text>DNA(n) + a 2'-deoxyribonucleoside 5'-triphosphate = DNA(n+1) + diphosphate</text>
        <dbReference type="Rhea" id="RHEA:22508"/>
        <dbReference type="Rhea" id="RHEA-COMP:17339"/>
        <dbReference type="Rhea" id="RHEA-COMP:17340"/>
        <dbReference type="ChEBI" id="CHEBI:33019"/>
        <dbReference type="ChEBI" id="CHEBI:61560"/>
        <dbReference type="ChEBI" id="CHEBI:173112"/>
        <dbReference type="EC" id="2.7.7.7"/>
    </reaction>
</comment>
<comment type="subunit">
    <text evidence="1">Forms a complex with the ssDNA-binding protein UL57, the DNA polymerase processivity factor UL44, and the alkaline exonuclease UL98. Interacts with the putative helicase-primase complex composed of UL70, UL102 and UL105 proteins; these interactions may coordinate leading and lagging strand DNA synthesis at the replication fork (By similarity).</text>
</comment>
<comment type="subcellular location">
    <subcellularLocation>
        <location evidence="1">Host nucleus</location>
    </subcellularLocation>
    <text evidence="1">the protein is present at discrete sites in nuclei, called replication compartments where viral DNA replication occurs.</text>
</comment>
<comment type="similarity">
    <text evidence="3">Belongs to the DNA polymerase type-B family.</text>
</comment>
<sequence>MFFNPYLSGGVTGGAVAGGRRQRSQPGSAQGSGKRPPQKQFLQIVPRGVMFDGQTGLIKHKTGRLPLMFYREIKHLLSHDMVWPCPWRETLVGRVVGPIRFHTYDQTDAVLFFDSPENVSPRYRQHLVPSGNVLRFFGATEHGYSICVNVFGQRSYFYCEYSDTDRLREVIASVGELVPEPRTPYAVSVTPATKTSIYGYGTRPVPDLQCVSISNWTMARKIGEYLLEQGFPVYEVRVDPLTRLVIDRRITTFGWCSVNRYDWRQQGRASTCDIEVDCDVSDLVAVPDDSSWPRYRCLSFDIECMSGEGGFPCAEKSDDIVIQISCVCYETGGNTAVDQGIPNGNDGRGCTSEGVIFGHSGLHLFTIGTCGQVGPDVDVYEFPSEYELLLGFMLFFQRYAPAFVTGYNINSFDLKYILTRLEYLYKVDSQRFCKLPTAQGGRFFLHSPAVGFKRQYAAAFPSASHNNPASTAATKVYIAGSVVIDMYPVCMAKTNSPNYKLNTMAELYLRQRKDDLSYKDIPRCFVANAEGRAQVGRYCLQDAVLVRDLFNTINFHYEAGAIARLAKIPLRRVIFDGQQIRIYTSLLDECACRDFILPNHYSKGTTVPETNSVAVSPNAAIISTAAVPGDAGSVAAMFQMSPPLQSAPSSQDGVSPGSGSNSSSSVGVFSVGSGSSGGVGVSNDNHGAGGTAAVSYQGATVFEPEVGYYNDPVAVFDFASLYPSIIMAHNLCYSTLLVPGGEYPVDPADVYSVTLENGVTHRFVRASVRVSVLSELLNKWVSQRRAVRECMRECQDPVRRMLLDKEQMALKVTCNAFYGFTGVVNGMMPCLPIAASITRIGRDMLERTARFIKDNFSEPCFLHNFFNQEDYVVGTREGDSEESSALPEGLETSSGGSNERRVEARVIYGDTDSVFVRFRGLTPQALVARGPSLAHYVTACLFVEPVKLEFEKVFVSLMMICKKRYIGKVEGASGLSMKGVDLVRKTACEFVKGVTRDVLSLLFEDREVSEAAVRLSRLSLDEVKKYGVPRGFWRILRRLVQARDDLYLHRVRVEDLVLSSVLSKDISLYRQSNLPHIAVIKRLAARSEELPSVGDRVFYVLTAPGVRTAPQGSSDNGDSVTAGVVSRSDAIDGTDDDADGGGVEESNRRGGEPAKKRARKPPSAVCNYEVAEDPSYVREHGVPIHADKYFEQVLKAVTNVLSPVFPGGETARKDKFLHMVLPRRLHLEPAFLPYSVKAHECC</sequence>
<accession>P08546</accession>
<accession>Q7M6M9</accession>
<gene>
    <name type="primary">UL54</name>
    <name type="synonym">HFLF2</name>
</gene>
<name>DPOL_HCMVA</name>
<feature type="chain" id="PRO_0000046507" description="DNA polymerase catalytic subunit">
    <location>
        <begin position="1"/>
        <end position="1242"/>
    </location>
</feature>
<feature type="region of interest" description="Disordered" evidence="2">
    <location>
        <begin position="14"/>
        <end position="38"/>
    </location>
</feature>
<feature type="region of interest" description="Disordered" evidence="2">
    <location>
        <begin position="644"/>
        <end position="665"/>
    </location>
</feature>
<feature type="region of interest" description="Disordered" evidence="2">
    <location>
        <begin position="877"/>
        <end position="898"/>
    </location>
</feature>
<feature type="region of interest" description="Disordered" evidence="2">
    <location>
        <begin position="1108"/>
        <end position="1163"/>
    </location>
</feature>
<feature type="compositionally biased region" description="Low complexity" evidence="2">
    <location>
        <begin position="653"/>
        <end position="665"/>
    </location>
</feature>
<feature type="compositionally biased region" description="Polar residues" evidence="2">
    <location>
        <begin position="1110"/>
        <end position="1119"/>
    </location>
</feature>
<feature type="compositionally biased region" description="Basic and acidic residues" evidence="2">
    <location>
        <begin position="1145"/>
        <end position="1155"/>
    </location>
</feature>
<feature type="sequence conflict" description="In Ref. 3." evidence="3" ref="3">
    <original>FV</original>
    <variation>VF</variation>
    <location>
        <begin position="942"/>
        <end position="943"/>
    </location>
</feature>
<feature type="helix" evidence="4">
    <location>
        <begin position="1229"/>
        <end position="1234"/>
    </location>
</feature>
<feature type="strand" evidence="4">
    <location>
        <begin position="1235"/>
        <end position="1237"/>
    </location>
</feature>
<feature type="helix" evidence="4">
    <location>
        <begin position="1238"/>
        <end position="1240"/>
    </location>
</feature>
<organism>
    <name type="scientific">Human cytomegalovirus (strain AD169)</name>
    <name type="common">HHV-5</name>
    <name type="synonym">Human herpesvirus 5</name>
    <dbReference type="NCBI Taxonomy" id="10360"/>
    <lineage>
        <taxon>Viruses</taxon>
        <taxon>Duplodnaviria</taxon>
        <taxon>Heunggongvirae</taxon>
        <taxon>Peploviricota</taxon>
        <taxon>Herviviricetes</taxon>
        <taxon>Herpesvirales</taxon>
        <taxon>Orthoherpesviridae</taxon>
        <taxon>Betaherpesvirinae</taxon>
        <taxon>Cytomegalovirus</taxon>
        <taxon>Cytomegalovirus humanbeta5</taxon>
        <taxon>Human cytomegalovirus</taxon>
    </lineage>
</organism>
<proteinExistence type="evidence at protein level"/>